<comment type="function">
    <text evidence="1">Catalyzes the 2-thiolation of uridine at the wobble position (U34) of tRNA, leading to the formation of s(2)U34.</text>
</comment>
<comment type="catalytic activity">
    <reaction evidence="1">
        <text>S-sulfanyl-L-cysteinyl-[protein] + uridine(34) in tRNA + AH2 + ATP = 2-thiouridine(34) in tRNA + L-cysteinyl-[protein] + A + AMP + diphosphate + H(+)</text>
        <dbReference type="Rhea" id="RHEA:47032"/>
        <dbReference type="Rhea" id="RHEA-COMP:10131"/>
        <dbReference type="Rhea" id="RHEA-COMP:11726"/>
        <dbReference type="Rhea" id="RHEA-COMP:11727"/>
        <dbReference type="Rhea" id="RHEA-COMP:11728"/>
        <dbReference type="ChEBI" id="CHEBI:13193"/>
        <dbReference type="ChEBI" id="CHEBI:15378"/>
        <dbReference type="ChEBI" id="CHEBI:17499"/>
        <dbReference type="ChEBI" id="CHEBI:29950"/>
        <dbReference type="ChEBI" id="CHEBI:30616"/>
        <dbReference type="ChEBI" id="CHEBI:33019"/>
        <dbReference type="ChEBI" id="CHEBI:61963"/>
        <dbReference type="ChEBI" id="CHEBI:65315"/>
        <dbReference type="ChEBI" id="CHEBI:87170"/>
        <dbReference type="ChEBI" id="CHEBI:456215"/>
        <dbReference type="EC" id="2.8.1.13"/>
    </reaction>
</comment>
<comment type="subcellular location">
    <subcellularLocation>
        <location evidence="1">Cytoplasm</location>
    </subcellularLocation>
</comment>
<comment type="similarity">
    <text evidence="1">Belongs to the MnmA/TRMU family.</text>
</comment>
<protein>
    <recommendedName>
        <fullName evidence="1">tRNA-specific 2-thiouridylase MnmA</fullName>
        <ecNumber evidence="1">2.8.1.13</ecNumber>
    </recommendedName>
</protein>
<proteinExistence type="inferred from homology"/>
<organism>
    <name type="scientific">Acidovorax ebreus (strain TPSY)</name>
    <name type="common">Diaphorobacter sp. (strain TPSY)</name>
    <dbReference type="NCBI Taxonomy" id="535289"/>
    <lineage>
        <taxon>Bacteria</taxon>
        <taxon>Pseudomonadati</taxon>
        <taxon>Pseudomonadota</taxon>
        <taxon>Betaproteobacteria</taxon>
        <taxon>Burkholderiales</taxon>
        <taxon>Comamonadaceae</taxon>
        <taxon>Diaphorobacter</taxon>
    </lineage>
</organism>
<keyword id="KW-0067">ATP-binding</keyword>
<keyword id="KW-0963">Cytoplasm</keyword>
<keyword id="KW-1015">Disulfide bond</keyword>
<keyword id="KW-0547">Nucleotide-binding</keyword>
<keyword id="KW-1185">Reference proteome</keyword>
<keyword id="KW-0694">RNA-binding</keyword>
<keyword id="KW-0808">Transferase</keyword>
<keyword id="KW-0819">tRNA processing</keyword>
<keyword id="KW-0820">tRNA-binding</keyword>
<feature type="chain" id="PRO_1000198611" description="tRNA-specific 2-thiouridylase MnmA">
    <location>
        <begin position="1"/>
        <end position="370"/>
    </location>
</feature>
<feature type="region of interest" description="Interaction with target base in tRNA" evidence="1">
    <location>
        <begin position="95"/>
        <end position="97"/>
    </location>
</feature>
<feature type="region of interest" description="Interaction with tRNA" evidence="1">
    <location>
        <begin position="148"/>
        <end position="150"/>
    </location>
</feature>
<feature type="region of interest" description="Interaction with tRNA" evidence="1">
    <location>
        <begin position="316"/>
        <end position="317"/>
    </location>
</feature>
<feature type="active site" description="Nucleophile" evidence="1">
    <location>
        <position position="100"/>
    </location>
</feature>
<feature type="active site" description="Cysteine persulfide intermediate" evidence="1">
    <location>
        <position position="198"/>
    </location>
</feature>
<feature type="binding site" evidence="1">
    <location>
        <begin position="9"/>
        <end position="16"/>
    </location>
    <ligand>
        <name>ATP</name>
        <dbReference type="ChEBI" id="CHEBI:30616"/>
    </ligand>
</feature>
<feature type="binding site" evidence="1">
    <location>
        <position position="35"/>
    </location>
    <ligand>
        <name>ATP</name>
        <dbReference type="ChEBI" id="CHEBI:30616"/>
    </ligand>
</feature>
<feature type="binding site" evidence="1">
    <location>
        <position position="124"/>
    </location>
    <ligand>
        <name>ATP</name>
        <dbReference type="ChEBI" id="CHEBI:30616"/>
    </ligand>
</feature>
<feature type="site" description="Interaction with tRNA" evidence="1">
    <location>
        <position position="125"/>
    </location>
</feature>
<feature type="site" description="Interaction with tRNA" evidence="1">
    <location>
        <position position="349"/>
    </location>
</feature>
<feature type="disulfide bond" description="Alternate" evidence="1">
    <location>
        <begin position="100"/>
        <end position="198"/>
    </location>
</feature>
<accession>B9MIA2</accession>
<evidence type="ECO:0000255" key="1">
    <source>
        <dbReference type="HAMAP-Rule" id="MF_00144"/>
    </source>
</evidence>
<reference key="1">
    <citation type="submission" date="2009-01" db="EMBL/GenBank/DDBJ databases">
        <title>Complete sequence of Diaphorobacter sp. TPSY.</title>
        <authorList>
            <consortium name="US DOE Joint Genome Institute"/>
            <person name="Lucas S."/>
            <person name="Copeland A."/>
            <person name="Lapidus A."/>
            <person name="Glavina del Rio T."/>
            <person name="Tice H."/>
            <person name="Bruce D."/>
            <person name="Goodwin L."/>
            <person name="Pitluck S."/>
            <person name="Chertkov O."/>
            <person name="Brettin T."/>
            <person name="Detter J.C."/>
            <person name="Han C."/>
            <person name="Larimer F."/>
            <person name="Land M."/>
            <person name="Hauser L."/>
            <person name="Kyrpides N."/>
            <person name="Mikhailova N."/>
            <person name="Coates J.D."/>
        </authorList>
    </citation>
    <scope>NUCLEOTIDE SEQUENCE [LARGE SCALE GENOMIC DNA]</scope>
    <source>
        <strain>TPSY</strain>
    </source>
</reference>
<name>MNMA_ACIET</name>
<sequence>MTKHRVVVGLSGGVDSAVTAHLLKQQGHEVVGIFMKNWEDDDDSEFCSSRQDFLDAASVADVIGIEIEHVNFAAEYKDRVFAEFLREYQAGRTPNPDVLCNAEIKFKAFLDHAMRLGAEKIATGHYARVRQNPATGLFELLKGLDPSKDQSYFLHRLNQAQLSKTLFPVGDLHKTEVRRIAADIGLPNAKKKDSTGICFIGERPFREFLNRYIQHAPGPILDDRGRKLGRHVGLSFYTLGQRQGLGIGGVKEKGAQRGAGDHAPWFVARKELETNTLRVVQGHEHPWLLSHRLDAQDASWIAGHPPAAGACAAKTRYRQQDAACTVLAAQGDAFSLQFPEAQWAVTPGQSAVLYDGEVCLGGGVIAAVNG</sequence>
<dbReference type="EC" id="2.8.1.13" evidence="1"/>
<dbReference type="EMBL" id="CP001392">
    <property type="protein sequence ID" value="ACM34840.1"/>
    <property type="molecule type" value="Genomic_DNA"/>
</dbReference>
<dbReference type="RefSeq" id="WP_015914623.1">
    <property type="nucleotide sequence ID" value="NC_011992.1"/>
</dbReference>
<dbReference type="SMR" id="B9MIA2"/>
<dbReference type="KEGG" id="dia:Dtpsy_3413"/>
<dbReference type="eggNOG" id="COG0482">
    <property type="taxonomic scope" value="Bacteria"/>
</dbReference>
<dbReference type="HOGENOM" id="CLU_035188_1_0_4"/>
<dbReference type="Proteomes" id="UP000000450">
    <property type="component" value="Chromosome"/>
</dbReference>
<dbReference type="GO" id="GO:0005737">
    <property type="term" value="C:cytoplasm"/>
    <property type="evidence" value="ECO:0007669"/>
    <property type="project" value="UniProtKB-SubCell"/>
</dbReference>
<dbReference type="GO" id="GO:0005524">
    <property type="term" value="F:ATP binding"/>
    <property type="evidence" value="ECO:0007669"/>
    <property type="project" value="UniProtKB-KW"/>
</dbReference>
<dbReference type="GO" id="GO:0000049">
    <property type="term" value="F:tRNA binding"/>
    <property type="evidence" value="ECO:0007669"/>
    <property type="project" value="UniProtKB-KW"/>
</dbReference>
<dbReference type="GO" id="GO:0103016">
    <property type="term" value="F:tRNA-uridine 2-sulfurtransferase activity"/>
    <property type="evidence" value="ECO:0007669"/>
    <property type="project" value="UniProtKB-EC"/>
</dbReference>
<dbReference type="GO" id="GO:0002143">
    <property type="term" value="P:tRNA wobble position uridine thiolation"/>
    <property type="evidence" value="ECO:0007669"/>
    <property type="project" value="TreeGrafter"/>
</dbReference>
<dbReference type="CDD" id="cd01998">
    <property type="entry name" value="MnmA_TRMU-like"/>
    <property type="match status" value="1"/>
</dbReference>
<dbReference type="FunFam" id="2.30.30.280:FF:000001">
    <property type="entry name" value="tRNA-specific 2-thiouridylase MnmA"/>
    <property type="match status" value="1"/>
</dbReference>
<dbReference type="FunFam" id="2.40.30.10:FF:000023">
    <property type="entry name" value="tRNA-specific 2-thiouridylase MnmA"/>
    <property type="match status" value="1"/>
</dbReference>
<dbReference type="FunFam" id="3.40.50.620:FF:000004">
    <property type="entry name" value="tRNA-specific 2-thiouridylase MnmA"/>
    <property type="match status" value="1"/>
</dbReference>
<dbReference type="Gene3D" id="2.30.30.280">
    <property type="entry name" value="Adenine nucleotide alpha hydrolases-like domains"/>
    <property type="match status" value="1"/>
</dbReference>
<dbReference type="Gene3D" id="3.40.50.620">
    <property type="entry name" value="HUPs"/>
    <property type="match status" value="1"/>
</dbReference>
<dbReference type="Gene3D" id="2.40.30.10">
    <property type="entry name" value="Translation factors"/>
    <property type="match status" value="1"/>
</dbReference>
<dbReference type="HAMAP" id="MF_00144">
    <property type="entry name" value="tRNA_thiouridyl_MnmA"/>
    <property type="match status" value="1"/>
</dbReference>
<dbReference type="InterPro" id="IPR004506">
    <property type="entry name" value="MnmA-like"/>
</dbReference>
<dbReference type="InterPro" id="IPR046885">
    <property type="entry name" value="MnmA-like_C"/>
</dbReference>
<dbReference type="InterPro" id="IPR046884">
    <property type="entry name" value="MnmA-like_central"/>
</dbReference>
<dbReference type="InterPro" id="IPR023382">
    <property type="entry name" value="MnmA-like_central_sf"/>
</dbReference>
<dbReference type="InterPro" id="IPR014729">
    <property type="entry name" value="Rossmann-like_a/b/a_fold"/>
</dbReference>
<dbReference type="NCBIfam" id="NF001138">
    <property type="entry name" value="PRK00143.1"/>
    <property type="match status" value="1"/>
</dbReference>
<dbReference type="NCBIfam" id="TIGR00420">
    <property type="entry name" value="trmU"/>
    <property type="match status" value="1"/>
</dbReference>
<dbReference type="PANTHER" id="PTHR11933:SF5">
    <property type="entry name" value="MITOCHONDRIAL TRNA-SPECIFIC 2-THIOURIDYLASE 1"/>
    <property type="match status" value="1"/>
</dbReference>
<dbReference type="PANTHER" id="PTHR11933">
    <property type="entry name" value="TRNA 5-METHYLAMINOMETHYL-2-THIOURIDYLATE -METHYLTRANSFERASE"/>
    <property type="match status" value="1"/>
</dbReference>
<dbReference type="Pfam" id="PF03054">
    <property type="entry name" value="tRNA_Me_trans"/>
    <property type="match status" value="1"/>
</dbReference>
<dbReference type="Pfam" id="PF20258">
    <property type="entry name" value="tRNA_Me_trans_C"/>
    <property type="match status" value="1"/>
</dbReference>
<dbReference type="Pfam" id="PF20259">
    <property type="entry name" value="tRNA_Me_trans_M"/>
    <property type="match status" value="1"/>
</dbReference>
<dbReference type="SUPFAM" id="SSF52402">
    <property type="entry name" value="Adenine nucleotide alpha hydrolases-like"/>
    <property type="match status" value="1"/>
</dbReference>
<gene>
    <name evidence="1" type="primary">mnmA</name>
    <name type="ordered locus">Dtpsy_3413</name>
</gene>